<evidence type="ECO:0000255" key="1">
    <source>
        <dbReference type="HAMAP-Rule" id="MF_01367"/>
    </source>
</evidence>
<evidence type="ECO:0000305" key="2"/>
<comment type="function">
    <text evidence="1">Binds to 23S rRNA. Forms part of two intersubunit bridges in the 70S ribosome.</text>
</comment>
<comment type="subunit">
    <text evidence="1">Part of the 50S ribosomal subunit. Forms a cluster with proteins L3 and L19. In the 70S ribosome, L14 and L19 interact and together make contacts with the 16S rRNA in bridges B5 and B8.</text>
</comment>
<comment type="similarity">
    <text evidence="1">Belongs to the universal ribosomal protein uL14 family.</text>
</comment>
<sequence length="122" mass="13047">MIQQETRLKVADNSGAREILTIKVLGGSGRKFANIGDVIVASVKQATPGGAVKKGDVVKAVIVRTKSGARRPDGSYIKFDDNAAVIIRDDKTPRGTRIFGPVARELREGGYMKIVSLAPEVL</sequence>
<organism>
    <name type="scientific">Streptococcus equi subsp. zooepidemicus (strain MGCS10565)</name>
    <dbReference type="NCBI Taxonomy" id="552526"/>
    <lineage>
        <taxon>Bacteria</taxon>
        <taxon>Bacillati</taxon>
        <taxon>Bacillota</taxon>
        <taxon>Bacilli</taxon>
        <taxon>Lactobacillales</taxon>
        <taxon>Streptococcaceae</taxon>
        <taxon>Streptococcus</taxon>
    </lineage>
</organism>
<name>RL14_STREM</name>
<dbReference type="EMBL" id="CP001129">
    <property type="protein sequence ID" value="ACG61449.1"/>
    <property type="molecule type" value="Genomic_DNA"/>
</dbReference>
<dbReference type="RefSeq" id="WP_012514740.1">
    <property type="nucleotide sequence ID" value="NC_011134.1"/>
</dbReference>
<dbReference type="SMR" id="B4U510"/>
<dbReference type="GeneID" id="83703914"/>
<dbReference type="KEGG" id="sez:Sez_0066"/>
<dbReference type="HOGENOM" id="CLU_095071_2_1_9"/>
<dbReference type="Proteomes" id="UP000001873">
    <property type="component" value="Chromosome"/>
</dbReference>
<dbReference type="GO" id="GO:0022625">
    <property type="term" value="C:cytosolic large ribosomal subunit"/>
    <property type="evidence" value="ECO:0007669"/>
    <property type="project" value="TreeGrafter"/>
</dbReference>
<dbReference type="GO" id="GO:0070180">
    <property type="term" value="F:large ribosomal subunit rRNA binding"/>
    <property type="evidence" value="ECO:0007669"/>
    <property type="project" value="TreeGrafter"/>
</dbReference>
<dbReference type="GO" id="GO:0003735">
    <property type="term" value="F:structural constituent of ribosome"/>
    <property type="evidence" value="ECO:0007669"/>
    <property type="project" value="InterPro"/>
</dbReference>
<dbReference type="GO" id="GO:0006412">
    <property type="term" value="P:translation"/>
    <property type="evidence" value="ECO:0007669"/>
    <property type="project" value="UniProtKB-UniRule"/>
</dbReference>
<dbReference type="CDD" id="cd00337">
    <property type="entry name" value="Ribosomal_uL14"/>
    <property type="match status" value="1"/>
</dbReference>
<dbReference type="FunFam" id="2.40.150.20:FF:000001">
    <property type="entry name" value="50S ribosomal protein L14"/>
    <property type="match status" value="1"/>
</dbReference>
<dbReference type="Gene3D" id="2.40.150.20">
    <property type="entry name" value="Ribosomal protein L14"/>
    <property type="match status" value="1"/>
</dbReference>
<dbReference type="HAMAP" id="MF_01367">
    <property type="entry name" value="Ribosomal_uL14"/>
    <property type="match status" value="1"/>
</dbReference>
<dbReference type="InterPro" id="IPR000218">
    <property type="entry name" value="Ribosomal_uL14"/>
</dbReference>
<dbReference type="InterPro" id="IPR005745">
    <property type="entry name" value="Ribosomal_uL14_bac-type"/>
</dbReference>
<dbReference type="InterPro" id="IPR019972">
    <property type="entry name" value="Ribosomal_uL14_CS"/>
</dbReference>
<dbReference type="InterPro" id="IPR036853">
    <property type="entry name" value="Ribosomal_uL14_sf"/>
</dbReference>
<dbReference type="NCBIfam" id="TIGR01067">
    <property type="entry name" value="rplN_bact"/>
    <property type="match status" value="1"/>
</dbReference>
<dbReference type="PANTHER" id="PTHR11761">
    <property type="entry name" value="50S/60S RIBOSOMAL PROTEIN L14/L23"/>
    <property type="match status" value="1"/>
</dbReference>
<dbReference type="PANTHER" id="PTHR11761:SF3">
    <property type="entry name" value="LARGE RIBOSOMAL SUBUNIT PROTEIN UL14M"/>
    <property type="match status" value="1"/>
</dbReference>
<dbReference type="Pfam" id="PF00238">
    <property type="entry name" value="Ribosomal_L14"/>
    <property type="match status" value="1"/>
</dbReference>
<dbReference type="SMART" id="SM01374">
    <property type="entry name" value="Ribosomal_L14"/>
    <property type="match status" value="1"/>
</dbReference>
<dbReference type="SUPFAM" id="SSF50193">
    <property type="entry name" value="Ribosomal protein L14"/>
    <property type="match status" value="1"/>
</dbReference>
<dbReference type="PROSITE" id="PS00049">
    <property type="entry name" value="RIBOSOMAL_L14"/>
    <property type="match status" value="1"/>
</dbReference>
<accession>B4U510</accession>
<reference key="1">
    <citation type="journal article" date="2008" name="PLoS ONE">
        <title>Genome sequence of a lancefield group C Streptococcus zooepidemicus strain causing epidemic nephritis: new information about an old disease.</title>
        <authorList>
            <person name="Beres S.B."/>
            <person name="Sesso R."/>
            <person name="Pinto S.W.L."/>
            <person name="Hoe N.P."/>
            <person name="Porcella S.F."/>
            <person name="Deleo F.R."/>
            <person name="Musser J.M."/>
        </authorList>
    </citation>
    <scope>NUCLEOTIDE SEQUENCE [LARGE SCALE GENOMIC DNA]</scope>
    <source>
        <strain>MGCS10565</strain>
    </source>
</reference>
<proteinExistence type="inferred from homology"/>
<gene>
    <name evidence="1" type="primary">rplN</name>
    <name type="ordered locus">Sez_0066</name>
</gene>
<feature type="chain" id="PRO_1000144332" description="Large ribosomal subunit protein uL14">
    <location>
        <begin position="1"/>
        <end position="122"/>
    </location>
</feature>
<protein>
    <recommendedName>
        <fullName evidence="1">Large ribosomal subunit protein uL14</fullName>
    </recommendedName>
    <alternativeName>
        <fullName evidence="2">50S ribosomal protein L14</fullName>
    </alternativeName>
</protein>
<keyword id="KW-0687">Ribonucleoprotein</keyword>
<keyword id="KW-0689">Ribosomal protein</keyword>
<keyword id="KW-0694">RNA-binding</keyword>
<keyword id="KW-0699">rRNA-binding</keyword>